<sequence length="203" mass="22604">MKDLTDKQQAVLAFITTIIKERGFPPTIREIGDEFGITAKGAYDHLKAIEKKGYLKTAKNQSRAIELIRQSPMESIPVQATSIPVIGRVAAGLPIFADENIESYIPVPDEMAKGNVPMYALRVQGDSMIEVGIDSGDIAIIEKRDIARNGEIVVALIEDEATLKVYYKEQDQIRLEARNPKYKPIKTKKATVIGKLVGLYRIY</sequence>
<proteinExistence type="inferred from homology"/>
<protein>
    <recommendedName>
        <fullName evidence="1">LexA repressor</fullName>
        <ecNumber evidence="1">3.4.21.88</ecNumber>
    </recommendedName>
</protein>
<gene>
    <name evidence="1" type="primary">lexA</name>
    <name type="ordered locus">LBL_1071</name>
</gene>
<feature type="chain" id="PRO_1000001299" description="LexA repressor">
    <location>
        <begin position="1"/>
        <end position="203"/>
    </location>
</feature>
<feature type="DNA-binding region" description="H-T-H motif" evidence="1">
    <location>
        <begin position="28"/>
        <end position="47"/>
    </location>
</feature>
<feature type="active site" description="For autocatalytic cleavage activity" evidence="1">
    <location>
        <position position="127"/>
    </location>
</feature>
<feature type="active site" description="For autocatalytic cleavage activity" evidence="1">
    <location>
        <position position="164"/>
    </location>
</feature>
<feature type="site" description="Cleavage; by autolysis" evidence="1">
    <location>
        <begin position="91"/>
        <end position="92"/>
    </location>
</feature>
<name>LEXA_LEPBL</name>
<accession>Q053A1</accession>
<comment type="function">
    <text evidence="1">Represses a number of genes involved in the response to DNA damage (SOS response), including recA and lexA. In the presence of single-stranded DNA, RecA interacts with LexA causing an autocatalytic cleavage which disrupts the DNA-binding part of LexA, leading to derepression of the SOS regulon and eventually DNA repair.</text>
</comment>
<comment type="catalytic activity">
    <reaction evidence="1">
        <text>Hydrolysis of Ala-|-Gly bond in repressor LexA.</text>
        <dbReference type="EC" id="3.4.21.88"/>
    </reaction>
</comment>
<comment type="subunit">
    <text evidence="1">Homodimer.</text>
</comment>
<comment type="similarity">
    <text evidence="1">Belongs to the peptidase S24 family.</text>
</comment>
<organism>
    <name type="scientific">Leptospira borgpetersenii serovar Hardjo-bovis (strain L550)</name>
    <dbReference type="NCBI Taxonomy" id="355276"/>
    <lineage>
        <taxon>Bacteria</taxon>
        <taxon>Pseudomonadati</taxon>
        <taxon>Spirochaetota</taxon>
        <taxon>Spirochaetia</taxon>
        <taxon>Leptospirales</taxon>
        <taxon>Leptospiraceae</taxon>
        <taxon>Leptospira</taxon>
    </lineage>
</organism>
<evidence type="ECO:0000255" key="1">
    <source>
        <dbReference type="HAMAP-Rule" id="MF_00015"/>
    </source>
</evidence>
<keyword id="KW-0068">Autocatalytic cleavage</keyword>
<keyword id="KW-0227">DNA damage</keyword>
<keyword id="KW-0234">DNA repair</keyword>
<keyword id="KW-0235">DNA replication</keyword>
<keyword id="KW-0238">DNA-binding</keyword>
<keyword id="KW-0378">Hydrolase</keyword>
<keyword id="KW-0678">Repressor</keyword>
<keyword id="KW-0742">SOS response</keyword>
<keyword id="KW-0804">Transcription</keyword>
<keyword id="KW-0805">Transcription regulation</keyword>
<reference key="1">
    <citation type="journal article" date="2006" name="Proc. Natl. Acad. Sci. U.S.A.">
        <title>Genome reduction in Leptospira borgpetersenii reflects limited transmission potential.</title>
        <authorList>
            <person name="Bulach D.M."/>
            <person name="Zuerner R.L."/>
            <person name="Wilson P."/>
            <person name="Seemann T."/>
            <person name="McGrath A."/>
            <person name="Cullen P.A."/>
            <person name="Davis J."/>
            <person name="Johnson M."/>
            <person name="Kuczek E."/>
            <person name="Alt D.P."/>
            <person name="Peterson-Burch B."/>
            <person name="Coppel R.L."/>
            <person name="Rood J.I."/>
            <person name="Davies J.K."/>
            <person name="Adler B."/>
        </authorList>
    </citation>
    <scope>NUCLEOTIDE SEQUENCE [LARGE SCALE GENOMIC DNA]</scope>
    <source>
        <strain>L550</strain>
    </source>
</reference>
<dbReference type="EC" id="3.4.21.88" evidence="1"/>
<dbReference type="EMBL" id="CP000348">
    <property type="protein sequence ID" value="ABJ78594.1"/>
    <property type="molecule type" value="Genomic_DNA"/>
</dbReference>
<dbReference type="RefSeq" id="WP_002736209.1">
    <property type="nucleotide sequence ID" value="NC_008508.1"/>
</dbReference>
<dbReference type="SMR" id="Q053A1"/>
<dbReference type="MEROPS" id="S24.001"/>
<dbReference type="GeneID" id="61173700"/>
<dbReference type="KEGG" id="lbl:LBL_1071"/>
<dbReference type="HOGENOM" id="CLU_066192_45_1_12"/>
<dbReference type="GO" id="GO:0003677">
    <property type="term" value="F:DNA binding"/>
    <property type="evidence" value="ECO:0007669"/>
    <property type="project" value="UniProtKB-UniRule"/>
</dbReference>
<dbReference type="GO" id="GO:0004252">
    <property type="term" value="F:serine-type endopeptidase activity"/>
    <property type="evidence" value="ECO:0007669"/>
    <property type="project" value="UniProtKB-UniRule"/>
</dbReference>
<dbReference type="GO" id="GO:0006281">
    <property type="term" value="P:DNA repair"/>
    <property type="evidence" value="ECO:0007669"/>
    <property type="project" value="UniProtKB-UniRule"/>
</dbReference>
<dbReference type="GO" id="GO:0006260">
    <property type="term" value="P:DNA replication"/>
    <property type="evidence" value="ECO:0007669"/>
    <property type="project" value="UniProtKB-UniRule"/>
</dbReference>
<dbReference type="GO" id="GO:0045892">
    <property type="term" value="P:negative regulation of DNA-templated transcription"/>
    <property type="evidence" value="ECO:0007669"/>
    <property type="project" value="UniProtKB-UniRule"/>
</dbReference>
<dbReference type="GO" id="GO:0006508">
    <property type="term" value="P:proteolysis"/>
    <property type="evidence" value="ECO:0007669"/>
    <property type="project" value="InterPro"/>
</dbReference>
<dbReference type="GO" id="GO:0009432">
    <property type="term" value="P:SOS response"/>
    <property type="evidence" value="ECO:0007669"/>
    <property type="project" value="UniProtKB-UniRule"/>
</dbReference>
<dbReference type="CDD" id="cd06529">
    <property type="entry name" value="S24_LexA-like"/>
    <property type="match status" value="1"/>
</dbReference>
<dbReference type="FunFam" id="1.10.10.10:FF:000009">
    <property type="entry name" value="LexA repressor"/>
    <property type="match status" value="1"/>
</dbReference>
<dbReference type="FunFam" id="2.10.109.10:FF:000001">
    <property type="entry name" value="LexA repressor"/>
    <property type="match status" value="1"/>
</dbReference>
<dbReference type="Gene3D" id="2.10.109.10">
    <property type="entry name" value="Umud Fragment, subunit A"/>
    <property type="match status" value="1"/>
</dbReference>
<dbReference type="Gene3D" id="1.10.10.10">
    <property type="entry name" value="Winged helix-like DNA-binding domain superfamily/Winged helix DNA-binding domain"/>
    <property type="match status" value="1"/>
</dbReference>
<dbReference type="HAMAP" id="MF_00015">
    <property type="entry name" value="LexA"/>
    <property type="match status" value="1"/>
</dbReference>
<dbReference type="InterPro" id="IPR006200">
    <property type="entry name" value="LexA"/>
</dbReference>
<dbReference type="InterPro" id="IPR039418">
    <property type="entry name" value="LexA-like"/>
</dbReference>
<dbReference type="InterPro" id="IPR036286">
    <property type="entry name" value="LexA/Signal_pep-like_sf"/>
</dbReference>
<dbReference type="InterPro" id="IPR006199">
    <property type="entry name" value="LexA_DNA-bd_dom"/>
</dbReference>
<dbReference type="InterPro" id="IPR050077">
    <property type="entry name" value="LexA_repressor"/>
</dbReference>
<dbReference type="InterPro" id="IPR006197">
    <property type="entry name" value="Peptidase_S24_LexA"/>
</dbReference>
<dbReference type="InterPro" id="IPR015927">
    <property type="entry name" value="Peptidase_S24_S26A/B/C"/>
</dbReference>
<dbReference type="InterPro" id="IPR036388">
    <property type="entry name" value="WH-like_DNA-bd_sf"/>
</dbReference>
<dbReference type="InterPro" id="IPR036390">
    <property type="entry name" value="WH_DNA-bd_sf"/>
</dbReference>
<dbReference type="NCBIfam" id="TIGR00498">
    <property type="entry name" value="lexA"/>
    <property type="match status" value="1"/>
</dbReference>
<dbReference type="PANTHER" id="PTHR33516">
    <property type="entry name" value="LEXA REPRESSOR"/>
    <property type="match status" value="1"/>
</dbReference>
<dbReference type="PANTHER" id="PTHR33516:SF2">
    <property type="entry name" value="LEXA REPRESSOR-RELATED"/>
    <property type="match status" value="1"/>
</dbReference>
<dbReference type="Pfam" id="PF01726">
    <property type="entry name" value="LexA_DNA_bind"/>
    <property type="match status" value="1"/>
</dbReference>
<dbReference type="Pfam" id="PF00717">
    <property type="entry name" value="Peptidase_S24"/>
    <property type="match status" value="1"/>
</dbReference>
<dbReference type="PRINTS" id="PR00726">
    <property type="entry name" value="LEXASERPTASE"/>
</dbReference>
<dbReference type="SUPFAM" id="SSF51306">
    <property type="entry name" value="LexA/Signal peptidase"/>
    <property type="match status" value="1"/>
</dbReference>
<dbReference type="SUPFAM" id="SSF46785">
    <property type="entry name" value="Winged helix' DNA-binding domain"/>
    <property type="match status" value="1"/>
</dbReference>